<organism>
    <name type="scientific">Pongo pygmaeus</name>
    <name type="common">Bornean orangutan</name>
    <dbReference type="NCBI Taxonomy" id="9600"/>
    <lineage>
        <taxon>Eukaryota</taxon>
        <taxon>Metazoa</taxon>
        <taxon>Chordata</taxon>
        <taxon>Craniata</taxon>
        <taxon>Vertebrata</taxon>
        <taxon>Euteleostomi</taxon>
        <taxon>Mammalia</taxon>
        <taxon>Eutheria</taxon>
        <taxon>Euarchontoglires</taxon>
        <taxon>Primates</taxon>
        <taxon>Haplorrhini</taxon>
        <taxon>Catarrhini</taxon>
        <taxon>Hominidae</taxon>
        <taxon>Pongo</taxon>
    </lineage>
</organism>
<proteinExistence type="evidence at transcript level"/>
<feature type="chain" id="PRO_0000069033" description="Muscarinic acetylcholine receptor M3">
    <location>
        <begin position="1"/>
        <end position="590"/>
    </location>
</feature>
<feature type="topological domain" description="Extracellular" evidence="1">
    <location>
        <begin position="1"/>
        <end position="67"/>
    </location>
</feature>
<feature type="transmembrane region" description="Helical; Name=1" evidence="1">
    <location>
        <begin position="68"/>
        <end position="91"/>
    </location>
</feature>
<feature type="topological domain" description="Cytoplasmic" evidence="1">
    <location>
        <begin position="92"/>
        <end position="104"/>
    </location>
</feature>
<feature type="transmembrane region" description="Helical; Name=2" evidence="1">
    <location>
        <begin position="105"/>
        <end position="130"/>
    </location>
</feature>
<feature type="topological domain" description="Extracellular" evidence="1">
    <location>
        <begin position="131"/>
        <end position="142"/>
    </location>
</feature>
<feature type="transmembrane region" description="Helical; Name=3" evidence="1">
    <location>
        <begin position="143"/>
        <end position="164"/>
    </location>
</feature>
<feature type="topological domain" description="Cytoplasmic" evidence="1">
    <location>
        <begin position="165"/>
        <end position="184"/>
    </location>
</feature>
<feature type="transmembrane region" description="Helical; Name=4" evidence="1">
    <location>
        <begin position="185"/>
        <end position="206"/>
    </location>
</feature>
<feature type="topological domain" description="Extracellular" evidence="1">
    <location>
        <begin position="207"/>
        <end position="229"/>
    </location>
</feature>
<feature type="transmembrane region" description="Helical; Name=5" evidence="1">
    <location>
        <begin position="230"/>
        <end position="252"/>
    </location>
</feature>
<feature type="topological domain" description="Cytoplasmic" evidence="1">
    <location>
        <begin position="253"/>
        <end position="491"/>
    </location>
</feature>
<feature type="transmembrane region" description="Helical; Name=6" evidence="1">
    <location>
        <begin position="492"/>
        <end position="514"/>
    </location>
</feature>
<feature type="topological domain" description="Extracellular" evidence="1">
    <location>
        <begin position="515"/>
        <end position="526"/>
    </location>
</feature>
<feature type="transmembrane region" description="Helical; Name=7" evidence="1">
    <location>
        <begin position="527"/>
        <end position="546"/>
    </location>
</feature>
<feature type="topological domain" description="Cytoplasmic" evidence="1">
    <location>
        <begin position="547"/>
        <end position="590"/>
    </location>
</feature>
<feature type="region of interest" description="Disordered" evidence="6">
    <location>
        <begin position="323"/>
        <end position="357"/>
    </location>
</feature>
<feature type="short sequence motif" description="Basolateral sorting signal" evidence="1">
    <location>
        <begin position="275"/>
        <end position="281"/>
    </location>
</feature>
<feature type="compositionally biased region" description="Low complexity" evidence="6">
    <location>
        <begin position="334"/>
        <end position="345"/>
    </location>
</feature>
<feature type="modified residue" description="Phosphoserine" evidence="3">
    <location>
        <position position="385"/>
    </location>
</feature>
<feature type="glycosylation site" description="N-linked (GlcNAc...) asparagine" evidence="4">
    <location>
        <position position="6"/>
    </location>
</feature>
<feature type="glycosylation site" description="N-linked (GlcNAc...) asparagine" evidence="4">
    <location>
        <position position="15"/>
    </location>
</feature>
<feature type="glycosylation site" description="N-linked (GlcNAc...) asparagine" evidence="4">
    <location>
        <position position="41"/>
    </location>
</feature>
<feature type="glycosylation site" description="N-linked (GlcNAc...) asparagine" evidence="4">
    <location>
        <position position="48"/>
    </location>
</feature>
<feature type="disulfide bond" evidence="5">
    <location>
        <begin position="141"/>
        <end position="221"/>
    </location>
</feature>
<feature type="disulfide bond" evidence="5">
    <location>
        <begin position="517"/>
        <end position="520"/>
    </location>
</feature>
<feature type="sequence conflict" description="In Ref. 2; CAH91540." evidence="7" ref="2">
    <original>R</original>
    <variation>P</variation>
    <location>
        <position position="31"/>
    </location>
</feature>
<feature type="sequence conflict" description="In Ref. 2; CAH91540." evidence="7" ref="2">
    <original>K</original>
    <variation>R</variation>
    <location>
        <position position="263"/>
    </location>
</feature>
<feature type="sequence conflict" description="In Ref. 2; CAH91540." evidence="7" ref="2">
    <original>A</original>
    <variation>T</variation>
    <location>
        <position position="303"/>
    </location>
</feature>
<keyword id="KW-1003">Cell membrane</keyword>
<keyword id="KW-1015">Disulfide bond</keyword>
<keyword id="KW-0256">Endoplasmic reticulum</keyword>
<keyword id="KW-0297">G-protein coupled receptor</keyword>
<keyword id="KW-0325">Glycoprotein</keyword>
<keyword id="KW-0472">Membrane</keyword>
<keyword id="KW-0597">Phosphoprotein</keyword>
<keyword id="KW-0628">Postsynaptic cell membrane</keyword>
<keyword id="KW-0675">Receptor</keyword>
<keyword id="KW-0770">Synapse</keyword>
<keyword id="KW-0807">Transducer</keyword>
<keyword id="KW-0812">Transmembrane</keyword>
<keyword id="KW-1133">Transmembrane helix</keyword>
<name>ACM3_PONPY</name>
<accession>Q9N2A2</accession>
<accession>Q5R9M0</accession>
<reference key="1">
    <citation type="journal article" date="2004" name="Mol. Biol. Evol.">
        <title>Human-specific amino acid changes found in 103 protein-coding genes.</title>
        <authorList>
            <person name="Kitano T."/>
            <person name="Liu Y.-H."/>
            <person name="Ueda S."/>
            <person name="Saitou N."/>
        </authorList>
    </citation>
    <scope>NUCLEOTIDE SEQUENCE [GENOMIC DNA]</scope>
    <source>
        <strain>Isolate oran-Po13</strain>
    </source>
</reference>
<reference key="2">
    <citation type="submission" date="2004-11" db="EMBL/GenBank/DDBJ databases">
        <authorList>
            <consortium name="The German cDNA consortium"/>
        </authorList>
    </citation>
    <scope>NUCLEOTIDE SEQUENCE [LARGE SCALE MRNA]</scope>
    <source>
        <tissue>Brain cortex</tissue>
    </source>
</reference>
<evidence type="ECO:0000250" key="1"/>
<evidence type="ECO:0000250" key="2">
    <source>
        <dbReference type="UniProtKB" id="P20309"/>
    </source>
</evidence>
<evidence type="ECO:0000250" key="3">
    <source>
        <dbReference type="UniProtKB" id="Q9ERZ3"/>
    </source>
</evidence>
<evidence type="ECO:0000255" key="4"/>
<evidence type="ECO:0000255" key="5">
    <source>
        <dbReference type="PROSITE-ProRule" id="PRU00521"/>
    </source>
</evidence>
<evidence type="ECO:0000256" key="6">
    <source>
        <dbReference type="SAM" id="MobiDB-lite"/>
    </source>
</evidence>
<evidence type="ECO:0000305" key="7"/>
<comment type="function">
    <text evidence="1">The muscarinic acetylcholine receptor mediates various cellular responses, including inhibition of adenylate cyclase, breakdown of phosphoinositides and modulation of potassium channels through the action of G proteins. Primary transducing effect is Pi turnover (By similarity).</text>
</comment>
<comment type="subunit">
    <text evidence="2 3">Homodimer; the dimers can form tetramers (By similarity). Interacts with NALCN (By similarity). Interacts with TMEM147 (By similarity).</text>
</comment>
<comment type="subcellular location">
    <subcellularLocation>
        <location evidence="2">Cell membrane</location>
        <topology evidence="4">Multi-pass membrane protein</topology>
    </subcellularLocation>
    <subcellularLocation>
        <location evidence="1">Postsynaptic cell membrane</location>
        <topology evidence="4">Multi-pass membrane protein</topology>
    </subcellularLocation>
    <subcellularLocation>
        <location evidence="2">Basolateral cell membrane</location>
        <topology evidence="4">Multi-pass membrane protein</topology>
    </subcellularLocation>
    <subcellularLocation>
        <location evidence="2">Endoplasmic reticulum membrane</location>
        <topology evidence="4">Multi-pass membrane protein</topology>
    </subcellularLocation>
    <text evidence="2">Colocalizes with TMEM147 in the endoplasmic reticulum (ER) membrane. TMEM147 impairs its trafficking to the cell membrane leading to its retention in the ER membrane.</text>
</comment>
<comment type="similarity">
    <text evidence="5">Belongs to the G-protein coupled receptor 1 family. Muscarinic acetylcholine receptor subfamily. CHRM3 sub-subfamily.</text>
</comment>
<dbReference type="EMBL" id="AB041398">
    <property type="protein sequence ID" value="BAA94483.1"/>
    <property type="molecule type" value="Genomic_DNA"/>
</dbReference>
<dbReference type="EMBL" id="CR859367">
    <property type="protein sequence ID" value="CAH91540.1"/>
    <property type="molecule type" value="mRNA"/>
</dbReference>
<dbReference type="RefSeq" id="XP_054304216.1">
    <property type="nucleotide sequence ID" value="XM_054448241.2"/>
</dbReference>
<dbReference type="RefSeq" id="XP_063526794.1">
    <property type="nucleotide sequence ID" value="XM_063670724.1"/>
</dbReference>
<dbReference type="RefSeq" id="XP_063526801.1">
    <property type="nucleotide sequence ID" value="XM_063670731.1"/>
</dbReference>
<dbReference type="SMR" id="Q9N2A2"/>
<dbReference type="GlyCosmos" id="Q9N2A2">
    <property type="glycosylation" value="4 sites, No reported glycans"/>
</dbReference>
<dbReference type="GeneID" id="129012523"/>
<dbReference type="KEGG" id="pon:100172838"/>
<dbReference type="GO" id="GO:0016323">
    <property type="term" value="C:basolateral plasma membrane"/>
    <property type="evidence" value="ECO:0007669"/>
    <property type="project" value="UniProtKB-SubCell"/>
</dbReference>
<dbReference type="GO" id="GO:0030425">
    <property type="term" value="C:dendrite"/>
    <property type="evidence" value="ECO:0007669"/>
    <property type="project" value="TreeGrafter"/>
</dbReference>
<dbReference type="GO" id="GO:0005789">
    <property type="term" value="C:endoplasmic reticulum membrane"/>
    <property type="evidence" value="ECO:0007669"/>
    <property type="project" value="UniProtKB-SubCell"/>
</dbReference>
<dbReference type="GO" id="GO:0005886">
    <property type="term" value="C:plasma membrane"/>
    <property type="evidence" value="ECO:0000250"/>
    <property type="project" value="UniProtKB"/>
</dbReference>
<dbReference type="GO" id="GO:0045211">
    <property type="term" value="C:postsynaptic membrane"/>
    <property type="evidence" value="ECO:0007669"/>
    <property type="project" value="UniProtKB-SubCell"/>
</dbReference>
<dbReference type="GO" id="GO:0042166">
    <property type="term" value="F:acetylcholine binding"/>
    <property type="evidence" value="ECO:0000250"/>
    <property type="project" value="UniProtKB"/>
</dbReference>
<dbReference type="GO" id="GO:0016907">
    <property type="term" value="F:G protein-coupled acetylcholine receptor activity"/>
    <property type="evidence" value="ECO:0000250"/>
    <property type="project" value="UniProtKB"/>
</dbReference>
<dbReference type="GO" id="GO:0004993">
    <property type="term" value="F:G protein-coupled serotonin receptor activity"/>
    <property type="evidence" value="ECO:0007669"/>
    <property type="project" value="TreeGrafter"/>
</dbReference>
<dbReference type="GO" id="GO:0007197">
    <property type="term" value="P:adenylate cyclase-inhibiting G protein-coupled acetylcholine receptor signaling pathway"/>
    <property type="evidence" value="ECO:0007669"/>
    <property type="project" value="TreeGrafter"/>
</dbReference>
<dbReference type="GO" id="GO:0007213">
    <property type="term" value="P:G protein-coupled acetylcholine receptor signaling pathway"/>
    <property type="evidence" value="ECO:0000250"/>
    <property type="project" value="UniProtKB"/>
</dbReference>
<dbReference type="GO" id="GO:0007187">
    <property type="term" value="P:G protein-coupled receptor signaling pathway, coupled to cyclic nucleotide second messenger"/>
    <property type="evidence" value="ECO:0007669"/>
    <property type="project" value="TreeGrafter"/>
</dbReference>
<dbReference type="GO" id="GO:0045987">
    <property type="term" value="P:positive regulation of smooth muscle contraction"/>
    <property type="evidence" value="ECO:0007669"/>
    <property type="project" value="InterPro"/>
</dbReference>
<dbReference type="GO" id="GO:0046541">
    <property type="term" value="P:saliva secretion"/>
    <property type="evidence" value="ECO:0007669"/>
    <property type="project" value="InterPro"/>
</dbReference>
<dbReference type="CDD" id="cd15299">
    <property type="entry name" value="7tmA_mAChR_M3"/>
    <property type="match status" value="1"/>
</dbReference>
<dbReference type="FunFam" id="1.20.1070.10:FF:000047">
    <property type="entry name" value="Muscarinic acetylcholine receptor"/>
    <property type="match status" value="1"/>
</dbReference>
<dbReference type="FunFam" id="1.20.1070.10:FF:000103">
    <property type="entry name" value="Muscarinic acetylcholine receptor"/>
    <property type="match status" value="1"/>
</dbReference>
<dbReference type="Gene3D" id="1.20.1070.10">
    <property type="entry name" value="Rhodopsin 7-helix transmembrane proteins"/>
    <property type="match status" value="2"/>
</dbReference>
<dbReference type="InterPro" id="IPR000276">
    <property type="entry name" value="GPCR_Rhodpsn"/>
</dbReference>
<dbReference type="InterPro" id="IPR017452">
    <property type="entry name" value="GPCR_Rhodpsn_7TM"/>
</dbReference>
<dbReference type="InterPro" id="IPR001183">
    <property type="entry name" value="Musac_Ach_M3_rcpt"/>
</dbReference>
<dbReference type="InterPro" id="IPR000995">
    <property type="entry name" value="Musac_Ach_rcpt"/>
</dbReference>
<dbReference type="PANTHER" id="PTHR24247">
    <property type="entry name" value="5-HYDROXYTRYPTAMINE RECEPTOR"/>
    <property type="match status" value="1"/>
</dbReference>
<dbReference type="PANTHER" id="PTHR24247:SF183">
    <property type="entry name" value="MUSCARINIC ACETYLCHOLINE RECEPTOR M3"/>
    <property type="match status" value="1"/>
</dbReference>
<dbReference type="Pfam" id="PF00001">
    <property type="entry name" value="7tm_1"/>
    <property type="match status" value="1"/>
</dbReference>
<dbReference type="PRINTS" id="PR00237">
    <property type="entry name" value="GPCRRHODOPSN"/>
</dbReference>
<dbReference type="PRINTS" id="PR00243">
    <property type="entry name" value="MUSCARINICR"/>
</dbReference>
<dbReference type="PRINTS" id="PR00540">
    <property type="entry name" value="MUSCRINICM3R"/>
</dbReference>
<dbReference type="SMART" id="SM01381">
    <property type="entry name" value="7TM_GPCR_Srsx"/>
    <property type="match status" value="1"/>
</dbReference>
<dbReference type="SUPFAM" id="SSF81321">
    <property type="entry name" value="Family A G protein-coupled receptor-like"/>
    <property type="match status" value="1"/>
</dbReference>
<dbReference type="PROSITE" id="PS00237">
    <property type="entry name" value="G_PROTEIN_RECEP_F1_1"/>
    <property type="match status" value="1"/>
</dbReference>
<dbReference type="PROSITE" id="PS50262">
    <property type="entry name" value="G_PROTEIN_RECEP_F1_2"/>
    <property type="match status" value="1"/>
</dbReference>
<gene>
    <name type="primary">CHRM3</name>
</gene>
<sequence length="590" mass="66136">MTLHSNSTTSPLFPNISSSWIHSPSDAGLPRGTVTHFGSYNVSRAAGNFSSPNGPTDDPLGGHTVWQVVFIAFLTGILALVTIIGNILVIVSFKVNKQLKTVNNYFLLSLACADLIIGVISMNLFTTYIIMNRWALGNLACDLWLAIDYVASNASVMNLLVISFDRYFSITRPLTYRAKRTTKRAGVMIGLAWVISFVLWAPAILFWQYFVGKRTVPPGECFIQFLSEPTITFGTAIAAFYMPVTIMTILYWRIYKETEKRTKELAGLQASGTEAETENFVHPTGSSRSCSSYELQQQSMKRANRRKYGRCHFWFTTKSWKPSSEQMDQDHSSSDSWNNNDAAASLENSASSDEEDIGSETRAIYSIVLKLPGHSTILNSTKLPSSDNLQVPEEELGMVDLERKANKLQAQKSVDDGGSFPKSFSKLPIQLESAVDTAKTADVNSSVGKTTATLPLSFKEATLAKRFALKTRSQITKRKRMSLVKEKKAAQTLSAILLAFIITWTPYNIMVLVNTFCDSCIPKTFWNLGYWLCYINSTVNPVCYALCNKTFRTTFKMLLLCQCDKKKRRKQQYQQRQSVIFHKRAPEQAL</sequence>
<protein>
    <recommendedName>
        <fullName>Muscarinic acetylcholine receptor M3</fullName>
    </recommendedName>
</protein>